<comment type="function">
    <text evidence="4 5 6">Activator of KIF1B plus-end-directed microtubule motor activity (PubMed:16225668). Required for organization of axonal microtubules, and axonal outgrowth and maintenance during peripheral and central nervous system development.</text>
</comment>
<comment type="subunit">
    <text evidence="4 5">Interacts with KIF1B; positively regulates KIF1B microtubule motor activity (PubMed:16225668). Interacts with STMN2 (PubMed:20621975).</text>
</comment>
<comment type="interaction">
    <interactant intactId="EBI-744150">
        <id>Q96EK5</id>
    </interactant>
    <interactant intactId="EBI-25840379">
        <id>Q14203-5</id>
        <label>DCTN1</label>
    </interactant>
    <organismsDiffer>false</organismsDiffer>
    <experiments>3</experiments>
</comment>
<comment type="interaction">
    <interactant intactId="EBI-744150">
        <id>Q96EK5</id>
    </interactant>
    <interactant intactId="EBI-11278980">
        <id>Q6UX07</id>
        <label>DHRS13</label>
    </interactant>
    <organismsDiffer>false</organismsDiffer>
    <experiments>3</experiments>
</comment>
<comment type="interaction">
    <interactant intactId="EBI-744150">
        <id>Q96EK5</id>
    </interactant>
    <interactant intactId="EBI-749514">
        <id>P16444</id>
        <label>DPEP1</label>
    </interactant>
    <organismsDiffer>false</organismsDiffer>
    <experiments>2</experiments>
</comment>
<comment type="interaction">
    <interactant intactId="EBI-744150">
        <id>Q96EK5</id>
    </interactant>
    <interactant intactId="EBI-745818">
        <id>P47804</id>
        <label>RGR</label>
    </interactant>
    <organismsDiffer>false</organismsDiffer>
    <experiments>2</experiments>
</comment>
<comment type="interaction">
    <interactant intactId="EBI-744150">
        <id>Q96EK5</id>
    </interactant>
    <interactant intactId="EBI-12117432">
        <id>Q8IY51</id>
        <label>TIGD4</label>
    </interactant>
    <organismsDiffer>false</organismsDiffer>
    <experiments>2</experiments>
</comment>
<comment type="subcellular location">
    <subcellularLocation>
        <location evidence="4 5 6">Cytoplasm</location>
        <location evidence="4 5 6">Cytoskeleton</location>
    </subcellularLocation>
</comment>
<comment type="tissue specificity">
    <text evidence="2 4">Highly expressed in heart, brain, ovary, testis, spinal cord and all specific brain regions examined. Moderate expressed at intermediate level in all other adult tissues examined, as well as in fetal liver and brain. Not expressed in blood leukocytes.</text>
</comment>
<comment type="disease" evidence="3 6">
    <disease id="DI-01681">
        <name>Goldberg-Shprintzen syndrome</name>
        <acronym>GOSHS</acronym>
        <description>A disorder characterized by intellectual disability, microcephaly, and dysmorphic facial features. Most patients also have Hirschsprung disease.</description>
        <dbReference type="MIM" id="609460"/>
    </disease>
    <text>The disease is caused by variants affecting the gene represented in this entry.</text>
</comment>
<comment type="similarity">
    <text evidence="9">Belongs to the KIF-binding protein family.</text>
</comment>
<comment type="caution">
    <text evidence="10 11 12">Was originally shown to localize in the mitochondrion and to play a role in mitochondrial transport (PubMed:16225668). Recent articles, however, have shown that it does not localize to mitochondria, it interacts with the cytoskeleton and does not have a role in mitochondrial function (PubMed:20621975, PubMed:23427148).</text>
</comment>
<comment type="sequence caution" evidence="9">
    <conflict type="erroneous initiation">
        <sequence resource="EMBL-CDS" id="BAA86593"/>
    </conflict>
</comment>
<evidence type="ECO:0000256" key="1">
    <source>
        <dbReference type="SAM" id="MobiDB-lite"/>
    </source>
</evidence>
<evidence type="ECO:0000269" key="2">
    <source>
    </source>
</evidence>
<evidence type="ECO:0000269" key="3">
    <source>
    </source>
</evidence>
<evidence type="ECO:0000269" key="4">
    <source>
    </source>
</evidence>
<evidence type="ECO:0000269" key="5">
    <source>
    </source>
</evidence>
<evidence type="ECO:0000269" key="6">
    <source>
    </source>
</evidence>
<evidence type="ECO:0000303" key="7">
    <source>
    </source>
</evidence>
<evidence type="ECO:0000303" key="8">
    <source>
    </source>
</evidence>
<evidence type="ECO:0000305" key="9"/>
<evidence type="ECO:0000305" key="10">
    <source>
    </source>
</evidence>
<evidence type="ECO:0000305" key="11">
    <source>
    </source>
</evidence>
<evidence type="ECO:0000305" key="12">
    <source>
    </source>
</evidence>
<evidence type="ECO:0000312" key="13">
    <source>
        <dbReference type="HGNC" id="HGNC:23419"/>
    </source>
</evidence>
<evidence type="ECO:0007744" key="14">
    <source>
    </source>
</evidence>
<name>KBP_HUMAN</name>
<reference key="1">
    <citation type="journal article" date="2005" name="BMC Cell Biol.">
        <title>The novel protein KBP regulates mitochondria localization by interaction with a kinesin-like protein.</title>
        <authorList>
            <person name="Wozniak M.J."/>
            <person name="Melzer M."/>
            <person name="Dorner C."/>
            <person name="Haring H.U."/>
            <person name="Lammers R."/>
        </authorList>
    </citation>
    <scope>NUCLEOTIDE SEQUENCE [MRNA]</scope>
    <scope>TISSUE SPECIFICITY</scope>
    <scope>SUBCELLULAR LOCATION</scope>
    <scope>INTERACTION WITH KIF1B</scope>
    <scope>FUNCTION</scope>
</reference>
<reference key="2">
    <citation type="journal article" date="1999" name="DNA Res.">
        <title>Prediction of the coding sequences of unidentified human genes. XV. The complete sequences of 100 new cDNA clones from brain which code for large proteins in vitro.</title>
        <authorList>
            <person name="Nagase T."/>
            <person name="Ishikawa K."/>
            <person name="Kikuno R."/>
            <person name="Hirosawa M."/>
            <person name="Nomura N."/>
            <person name="Ohara O."/>
        </authorList>
    </citation>
    <scope>NUCLEOTIDE SEQUENCE [LARGE SCALE MRNA]</scope>
    <scope>TISSUE SPECIFICITY</scope>
    <scope>VARIANT SER-66</scope>
    <source>
        <tissue>Brain</tissue>
    </source>
</reference>
<reference key="3">
    <citation type="journal article" date="2002" name="DNA Res.">
        <title>Construction of expression-ready cDNA clones for KIAA genes: manual curation of 330 KIAA cDNA clones.</title>
        <authorList>
            <person name="Nakajima D."/>
            <person name="Okazaki N."/>
            <person name="Yamakawa H."/>
            <person name="Kikuno R."/>
            <person name="Ohara O."/>
            <person name="Nagase T."/>
        </authorList>
    </citation>
    <scope>SEQUENCE REVISION</scope>
</reference>
<reference key="4">
    <citation type="journal article" date="2004" name="Nat. Genet.">
        <title>Complete sequencing and characterization of 21,243 full-length human cDNAs.</title>
        <authorList>
            <person name="Ota T."/>
            <person name="Suzuki Y."/>
            <person name="Nishikawa T."/>
            <person name="Otsuki T."/>
            <person name="Sugiyama T."/>
            <person name="Irie R."/>
            <person name="Wakamatsu A."/>
            <person name="Hayashi K."/>
            <person name="Sato H."/>
            <person name="Nagai K."/>
            <person name="Kimura K."/>
            <person name="Makita H."/>
            <person name="Sekine M."/>
            <person name="Obayashi M."/>
            <person name="Nishi T."/>
            <person name="Shibahara T."/>
            <person name="Tanaka T."/>
            <person name="Ishii S."/>
            <person name="Yamamoto J."/>
            <person name="Saito K."/>
            <person name="Kawai Y."/>
            <person name="Isono Y."/>
            <person name="Nakamura Y."/>
            <person name="Nagahari K."/>
            <person name="Murakami K."/>
            <person name="Yasuda T."/>
            <person name="Iwayanagi T."/>
            <person name="Wagatsuma M."/>
            <person name="Shiratori A."/>
            <person name="Sudo H."/>
            <person name="Hosoiri T."/>
            <person name="Kaku Y."/>
            <person name="Kodaira H."/>
            <person name="Kondo H."/>
            <person name="Sugawara M."/>
            <person name="Takahashi M."/>
            <person name="Kanda K."/>
            <person name="Yokoi T."/>
            <person name="Furuya T."/>
            <person name="Kikkawa E."/>
            <person name="Omura Y."/>
            <person name="Abe K."/>
            <person name="Kamihara K."/>
            <person name="Katsuta N."/>
            <person name="Sato K."/>
            <person name="Tanikawa M."/>
            <person name="Yamazaki M."/>
            <person name="Ninomiya K."/>
            <person name="Ishibashi T."/>
            <person name="Yamashita H."/>
            <person name="Murakawa K."/>
            <person name="Fujimori K."/>
            <person name="Tanai H."/>
            <person name="Kimata M."/>
            <person name="Watanabe M."/>
            <person name="Hiraoka S."/>
            <person name="Chiba Y."/>
            <person name="Ishida S."/>
            <person name="Ono Y."/>
            <person name="Takiguchi S."/>
            <person name="Watanabe S."/>
            <person name="Yosida M."/>
            <person name="Hotuta T."/>
            <person name="Kusano J."/>
            <person name="Kanehori K."/>
            <person name="Takahashi-Fujii A."/>
            <person name="Hara H."/>
            <person name="Tanase T.-O."/>
            <person name="Nomura Y."/>
            <person name="Togiya S."/>
            <person name="Komai F."/>
            <person name="Hara R."/>
            <person name="Takeuchi K."/>
            <person name="Arita M."/>
            <person name="Imose N."/>
            <person name="Musashino K."/>
            <person name="Yuuki H."/>
            <person name="Oshima A."/>
            <person name="Sasaki N."/>
            <person name="Aotsuka S."/>
            <person name="Yoshikawa Y."/>
            <person name="Matsunawa H."/>
            <person name="Ichihara T."/>
            <person name="Shiohata N."/>
            <person name="Sano S."/>
            <person name="Moriya S."/>
            <person name="Momiyama H."/>
            <person name="Satoh N."/>
            <person name="Takami S."/>
            <person name="Terashima Y."/>
            <person name="Suzuki O."/>
            <person name="Nakagawa S."/>
            <person name="Senoh A."/>
            <person name="Mizoguchi H."/>
            <person name="Goto Y."/>
            <person name="Shimizu F."/>
            <person name="Wakebe H."/>
            <person name="Hishigaki H."/>
            <person name="Watanabe T."/>
            <person name="Sugiyama A."/>
            <person name="Takemoto M."/>
            <person name="Kawakami B."/>
            <person name="Yamazaki M."/>
            <person name="Watanabe K."/>
            <person name="Kumagai A."/>
            <person name="Itakura S."/>
            <person name="Fukuzumi Y."/>
            <person name="Fujimori Y."/>
            <person name="Komiyama M."/>
            <person name="Tashiro H."/>
            <person name="Tanigami A."/>
            <person name="Fujiwara T."/>
            <person name="Ono T."/>
            <person name="Yamada K."/>
            <person name="Fujii Y."/>
            <person name="Ozaki K."/>
            <person name="Hirao M."/>
            <person name="Ohmori Y."/>
            <person name="Kawabata A."/>
            <person name="Hikiji T."/>
            <person name="Kobatake N."/>
            <person name="Inagaki H."/>
            <person name="Ikema Y."/>
            <person name="Okamoto S."/>
            <person name="Okitani R."/>
            <person name="Kawakami T."/>
            <person name="Noguchi S."/>
            <person name="Itoh T."/>
            <person name="Shigeta K."/>
            <person name="Senba T."/>
            <person name="Matsumura K."/>
            <person name="Nakajima Y."/>
            <person name="Mizuno T."/>
            <person name="Morinaga M."/>
            <person name="Sasaki M."/>
            <person name="Togashi T."/>
            <person name="Oyama M."/>
            <person name="Hata H."/>
            <person name="Watanabe M."/>
            <person name="Komatsu T."/>
            <person name="Mizushima-Sugano J."/>
            <person name="Satoh T."/>
            <person name="Shirai Y."/>
            <person name="Takahashi Y."/>
            <person name="Nakagawa K."/>
            <person name="Okumura K."/>
            <person name="Nagase T."/>
            <person name="Nomura N."/>
            <person name="Kikuchi H."/>
            <person name="Masuho Y."/>
            <person name="Yamashita R."/>
            <person name="Nakai K."/>
            <person name="Yada T."/>
            <person name="Nakamura Y."/>
            <person name="Ohara O."/>
            <person name="Isogai T."/>
            <person name="Sugano S."/>
        </authorList>
    </citation>
    <scope>NUCLEOTIDE SEQUENCE [LARGE SCALE MRNA]</scope>
    <source>
        <tissue>Tongue</tissue>
    </source>
</reference>
<reference key="5">
    <citation type="journal article" date="2004" name="Nature">
        <title>The DNA sequence and comparative analysis of human chromosome 10.</title>
        <authorList>
            <person name="Deloukas P."/>
            <person name="Earthrowl M.E."/>
            <person name="Grafham D.V."/>
            <person name="Rubenfield M."/>
            <person name="French L."/>
            <person name="Steward C.A."/>
            <person name="Sims S.K."/>
            <person name="Jones M.C."/>
            <person name="Searle S."/>
            <person name="Scott C."/>
            <person name="Howe K."/>
            <person name="Hunt S.E."/>
            <person name="Andrews T.D."/>
            <person name="Gilbert J.G.R."/>
            <person name="Swarbreck D."/>
            <person name="Ashurst J.L."/>
            <person name="Taylor A."/>
            <person name="Battles J."/>
            <person name="Bird C.P."/>
            <person name="Ainscough R."/>
            <person name="Almeida J.P."/>
            <person name="Ashwell R.I.S."/>
            <person name="Ambrose K.D."/>
            <person name="Babbage A.K."/>
            <person name="Bagguley C.L."/>
            <person name="Bailey J."/>
            <person name="Banerjee R."/>
            <person name="Bates K."/>
            <person name="Beasley H."/>
            <person name="Bray-Allen S."/>
            <person name="Brown A.J."/>
            <person name="Brown J.Y."/>
            <person name="Burford D.C."/>
            <person name="Burrill W."/>
            <person name="Burton J."/>
            <person name="Cahill P."/>
            <person name="Camire D."/>
            <person name="Carter N.P."/>
            <person name="Chapman J.C."/>
            <person name="Clark S.Y."/>
            <person name="Clarke G."/>
            <person name="Clee C.M."/>
            <person name="Clegg S."/>
            <person name="Corby N."/>
            <person name="Coulson A."/>
            <person name="Dhami P."/>
            <person name="Dutta I."/>
            <person name="Dunn M."/>
            <person name="Faulkner L."/>
            <person name="Frankish A."/>
            <person name="Frankland J.A."/>
            <person name="Garner P."/>
            <person name="Garnett J."/>
            <person name="Gribble S."/>
            <person name="Griffiths C."/>
            <person name="Grocock R."/>
            <person name="Gustafson E."/>
            <person name="Hammond S."/>
            <person name="Harley J.L."/>
            <person name="Hart E."/>
            <person name="Heath P.D."/>
            <person name="Ho T.P."/>
            <person name="Hopkins B."/>
            <person name="Horne J."/>
            <person name="Howden P.J."/>
            <person name="Huckle E."/>
            <person name="Hynds C."/>
            <person name="Johnson C."/>
            <person name="Johnson D."/>
            <person name="Kana A."/>
            <person name="Kay M."/>
            <person name="Kimberley A.M."/>
            <person name="Kershaw J.K."/>
            <person name="Kokkinaki M."/>
            <person name="Laird G.K."/>
            <person name="Lawlor S."/>
            <person name="Lee H.M."/>
            <person name="Leongamornlert D.A."/>
            <person name="Laird G."/>
            <person name="Lloyd C."/>
            <person name="Lloyd D.M."/>
            <person name="Loveland J."/>
            <person name="Lovell J."/>
            <person name="McLaren S."/>
            <person name="McLay K.E."/>
            <person name="McMurray A."/>
            <person name="Mashreghi-Mohammadi M."/>
            <person name="Matthews L."/>
            <person name="Milne S."/>
            <person name="Nickerson T."/>
            <person name="Nguyen M."/>
            <person name="Overton-Larty E."/>
            <person name="Palmer S.A."/>
            <person name="Pearce A.V."/>
            <person name="Peck A.I."/>
            <person name="Pelan S."/>
            <person name="Phillimore B."/>
            <person name="Porter K."/>
            <person name="Rice C.M."/>
            <person name="Rogosin A."/>
            <person name="Ross M.T."/>
            <person name="Sarafidou T."/>
            <person name="Sehra H.K."/>
            <person name="Shownkeen R."/>
            <person name="Skuce C.D."/>
            <person name="Smith M."/>
            <person name="Standring L."/>
            <person name="Sycamore N."/>
            <person name="Tester J."/>
            <person name="Thorpe A."/>
            <person name="Torcasso W."/>
            <person name="Tracey A."/>
            <person name="Tromans A."/>
            <person name="Tsolas J."/>
            <person name="Wall M."/>
            <person name="Walsh J."/>
            <person name="Wang H."/>
            <person name="Weinstock K."/>
            <person name="West A.P."/>
            <person name="Willey D.L."/>
            <person name="Whitehead S.L."/>
            <person name="Wilming L."/>
            <person name="Wray P.W."/>
            <person name="Young L."/>
            <person name="Chen Y."/>
            <person name="Lovering R.C."/>
            <person name="Moschonas N.K."/>
            <person name="Siebert R."/>
            <person name="Fechtel K."/>
            <person name="Bentley D."/>
            <person name="Durbin R.M."/>
            <person name="Hubbard T."/>
            <person name="Doucette-Stamm L."/>
            <person name="Beck S."/>
            <person name="Smith D.R."/>
            <person name="Rogers J."/>
        </authorList>
    </citation>
    <scope>NUCLEOTIDE SEQUENCE [LARGE SCALE GENOMIC DNA]</scope>
</reference>
<reference key="6">
    <citation type="journal article" date="2004" name="Genome Res.">
        <title>The status, quality, and expansion of the NIH full-length cDNA project: the Mammalian Gene Collection (MGC).</title>
        <authorList>
            <consortium name="The MGC Project Team"/>
        </authorList>
    </citation>
    <scope>NUCLEOTIDE SEQUENCE [LARGE SCALE MRNA]</scope>
    <source>
        <tissue>Lung</tissue>
    </source>
</reference>
<reference key="7">
    <citation type="journal article" date="2007" name="BMC Genomics">
        <title>The full-ORF clone resource of the German cDNA consortium.</title>
        <authorList>
            <person name="Bechtel S."/>
            <person name="Rosenfelder H."/>
            <person name="Duda A."/>
            <person name="Schmidt C.P."/>
            <person name="Ernst U."/>
            <person name="Wellenreuther R."/>
            <person name="Mehrle A."/>
            <person name="Schuster C."/>
            <person name="Bahr A."/>
            <person name="Bloecker H."/>
            <person name="Heubner D."/>
            <person name="Hoerlein A."/>
            <person name="Michel G."/>
            <person name="Wedler H."/>
            <person name="Koehrer K."/>
            <person name="Ottenwaelder B."/>
            <person name="Poustka A."/>
            <person name="Wiemann S."/>
            <person name="Schupp I."/>
        </authorList>
    </citation>
    <scope>NUCLEOTIDE SEQUENCE [LARGE SCALE MRNA] OF 314-621</scope>
    <source>
        <tissue>Uterus</tissue>
    </source>
</reference>
<reference key="8">
    <citation type="journal article" date="2005" name="Am. J. Hum. Genet.">
        <title>Homozygous nonsense mutations in KIAA1279 are associated with malformations of the central and enteric nervous systems.</title>
        <authorList>
            <person name="Brooks A.S."/>
            <person name="Bertoli-Avella A.M."/>
            <person name="Burzynski G.M."/>
            <person name="Breedveld G.J."/>
            <person name="Osinga J."/>
            <person name="Boven L.G."/>
            <person name="Hurst J.A."/>
            <person name="Mancini G.M.S."/>
            <person name="Lequin M.H."/>
            <person name="de Coo R.F."/>
            <person name="Matera I."/>
            <person name="de Graaff E."/>
            <person name="Meijers C."/>
            <person name="Willems P.J."/>
            <person name="Tibboel D."/>
            <person name="Oostra B.A."/>
            <person name="Hofstra R.M.W."/>
        </authorList>
    </citation>
    <scope>INVOLVEMENT IN GOSHS</scope>
</reference>
<reference key="9">
    <citation type="journal article" date="2010" name="Hum. Mol. Genet.">
        <title>KBP interacts with SCG10, linking Goldberg-Shprintzen syndrome to microtubule dynamics and neuronal differentiation.</title>
        <authorList>
            <person name="Alves M.M."/>
            <person name="Burzynski G."/>
            <person name="Delalande J.M."/>
            <person name="Osinga J."/>
            <person name="van der Goot A."/>
            <person name="Dolga A.M."/>
            <person name="de Graaff E."/>
            <person name="Brooks A.S."/>
            <person name="Metzger M."/>
            <person name="Eisel U.L."/>
            <person name="Shepherd I."/>
            <person name="Eggen B.J."/>
            <person name="Hofstra R.M."/>
        </authorList>
    </citation>
    <scope>FUNCTION</scope>
    <scope>INTERACTION WITH STMN2</scope>
    <scope>SUBCELLULAR LOCATION</scope>
</reference>
<reference key="10">
    <citation type="journal article" date="2011" name="BMC Syst. Biol.">
        <title>Initial characterization of the human central proteome.</title>
        <authorList>
            <person name="Burkard T.R."/>
            <person name="Planyavsky M."/>
            <person name="Kaupe I."/>
            <person name="Breitwieser F.P."/>
            <person name="Buerckstuemmer T."/>
            <person name="Bennett K.L."/>
            <person name="Superti-Furga G."/>
            <person name="Colinge J."/>
        </authorList>
    </citation>
    <scope>IDENTIFICATION BY MASS SPECTROMETRY [LARGE SCALE ANALYSIS]</scope>
</reference>
<reference key="11">
    <citation type="journal article" date="2013" name="Hum. Mol. Genet.">
        <title>KBP-cytoskeleton interactions underlie developmental anomalies in Goldberg-Shprintzen syndrome.</title>
        <authorList>
            <person name="Drevillon L."/>
            <person name="Megarbane A."/>
            <person name="Demeer B."/>
            <person name="Matar C."/>
            <person name="Benit P."/>
            <person name="Briand-Suleau A."/>
            <person name="Bodereau V."/>
            <person name="Ghoumid J."/>
            <person name="Nasser M."/>
            <person name="Decrouy X."/>
            <person name="Doco-Fenzy M."/>
            <person name="Rustin P."/>
            <person name="Gaillard D."/>
            <person name="Goossens M."/>
            <person name="Giurgea I."/>
        </authorList>
    </citation>
    <scope>INVOLVEMENT IN GOSHS</scope>
    <scope>FUNCTION</scope>
    <scope>SUBCELLULAR LOCATION</scope>
</reference>
<reference key="12">
    <citation type="journal article" date="2013" name="J. Proteome Res.">
        <title>Toward a comprehensive characterization of a human cancer cell phosphoproteome.</title>
        <authorList>
            <person name="Zhou H."/>
            <person name="Di Palma S."/>
            <person name="Preisinger C."/>
            <person name="Peng M."/>
            <person name="Polat A.N."/>
            <person name="Heck A.J."/>
            <person name="Mohammed S."/>
        </authorList>
    </citation>
    <scope>PHOSPHORYLATION [LARGE SCALE ANALYSIS] AT SER-178</scope>
    <scope>IDENTIFICATION BY MASS SPECTROMETRY [LARGE SCALE ANALYSIS]</scope>
    <source>
        <tissue>Cervix carcinoma</tissue>
    </source>
</reference>
<sequence>MANVPWAEVCEKFQAALALSRVELHKNPEKEPYKSKYSARALLEEVKALLGPAPEDEDERPEAEDGPGAGDHALGLPAEVVEPEGPVAQRAVRLAVIEFHLGVNHIDTEELSAGEEHLVKCLRLLRRYRLSHDCISLCIQAQNNLGILWSEREEIETAQAYLESSEALYNQYMKEVGSPPLDPTERFLPEEEKLTEQERSKRFEKVYTHNLYYLAQVYQHLEMFEKAAHYCHSTLKRQLEHNAYHPIEWAINAATLSQFYINKLCFMEARHCLSAANVIFGQTGKISATEDTPEAEGEVPELYHQRKGEIARCWIKYCLTLMQNAQLSMQDNIGELDLDKQSELRALRKKELDEEESIRKKAVQFGTGELCDAISAVEEKVSYLRPLDFEEARELFLLGQHYVFEAKEFFQIDGYVTDHIEVVQDHSALFKVLAFFETDMERRCKMHKRRIAMLEPLTVDLNPQYYLLVNRQIQFEIAHAYYDMMDLKVAIADRLRDPDSHIVKKINNLNKSALKYYQLFLDSLRDPNKVFPEHIGEDVLRPAMLAKFRVARLYGKIITADPKKELENLATSLEHYKFIVDYCEKHPEAAQEIEVELELSKEMVSLLPTKMERFRTKMALT</sequence>
<accession>Q96EK5</accession>
<accession>A8K5M8</accession>
<accession>Q9BR89</accession>
<accession>Q9ULE1</accession>
<accession>Q9Y428</accession>
<proteinExistence type="evidence at protein level"/>
<dbReference type="EMBL" id="AB033105">
    <property type="protein sequence ID" value="BAA86593.1"/>
    <property type="status" value="ALT_INIT"/>
    <property type="molecule type" value="mRNA"/>
</dbReference>
<dbReference type="EMBL" id="AL359844">
    <property type="status" value="NOT_ANNOTATED_CDS"/>
    <property type="molecule type" value="Genomic_DNA"/>
</dbReference>
<dbReference type="EMBL" id="AK291343">
    <property type="protein sequence ID" value="BAF84032.1"/>
    <property type="molecule type" value="mRNA"/>
</dbReference>
<dbReference type="EMBL" id="BC012180">
    <property type="protein sequence ID" value="AAH12180.1"/>
    <property type="molecule type" value="mRNA"/>
</dbReference>
<dbReference type="EMBL" id="AL050190">
    <property type="protein sequence ID" value="CAB43311.1"/>
    <property type="molecule type" value="mRNA"/>
</dbReference>
<dbReference type="CCDS" id="CCDS7284.1"/>
<dbReference type="PIR" id="T08798">
    <property type="entry name" value="T08798"/>
</dbReference>
<dbReference type="RefSeq" id="NP_056449.1">
    <property type="nucleotide sequence ID" value="NM_015634.4"/>
</dbReference>
<dbReference type="PDB" id="6ZPG">
    <property type="method" value="EM"/>
    <property type="resolution" value="4.60 A"/>
    <property type="chains" value="A=1-621"/>
</dbReference>
<dbReference type="PDB" id="6ZPH">
    <property type="method" value="EM"/>
    <property type="resolution" value="6.90 A"/>
    <property type="chains" value="A=1-621"/>
</dbReference>
<dbReference type="PDB" id="7RSI">
    <property type="method" value="EM"/>
    <property type="resolution" value="4.90 A"/>
    <property type="chains" value="B=1-621"/>
</dbReference>
<dbReference type="PDB" id="7RSQ">
    <property type="method" value="EM"/>
    <property type="resolution" value="3.80 A"/>
    <property type="chains" value="B=1-621"/>
</dbReference>
<dbReference type="PDB" id="7RYP">
    <property type="method" value="EM"/>
    <property type="resolution" value="4.80 A"/>
    <property type="chains" value="B=1-621"/>
</dbReference>
<dbReference type="PDB" id="7RYQ">
    <property type="method" value="EM"/>
    <property type="resolution" value="4.60 A"/>
    <property type="chains" value="B=1-621"/>
</dbReference>
<dbReference type="PDBsum" id="6ZPG"/>
<dbReference type="PDBsum" id="6ZPH"/>
<dbReference type="PDBsum" id="7RSI"/>
<dbReference type="PDBsum" id="7RSQ"/>
<dbReference type="PDBsum" id="7RYP"/>
<dbReference type="PDBsum" id="7RYQ"/>
<dbReference type="EMDB" id="EMD-11338"/>
<dbReference type="EMDB" id="EMD-11339"/>
<dbReference type="EMDB" id="EMD-24672"/>
<dbReference type="EMDB" id="EMD-24677"/>
<dbReference type="EMDB" id="EMD-24744"/>
<dbReference type="EMDB" id="EMD-24745"/>
<dbReference type="SMR" id="Q96EK5"/>
<dbReference type="BioGRID" id="117567">
    <property type="interactions" value="216"/>
</dbReference>
<dbReference type="FunCoup" id="Q96EK5">
    <property type="interactions" value="2140"/>
</dbReference>
<dbReference type="IntAct" id="Q96EK5">
    <property type="interactions" value="94"/>
</dbReference>
<dbReference type="MINT" id="Q96EK5"/>
<dbReference type="STRING" id="9606.ENSP00000354848"/>
<dbReference type="GlyGen" id="Q96EK5">
    <property type="glycosylation" value="2 sites, 1 O-linked glycan (1 site)"/>
</dbReference>
<dbReference type="iPTMnet" id="Q96EK5"/>
<dbReference type="MetOSite" id="Q96EK5"/>
<dbReference type="PhosphoSitePlus" id="Q96EK5"/>
<dbReference type="SwissPalm" id="Q96EK5"/>
<dbReference type="BioMuta" id="KIF1BP"/>
<dbReference type="DMDM" id="73920081"/>
<dbReference type="jPOST" id="Q96EK5"/>
<dbReference type="MassIVE" id="Q96EK5"/>
<dbReference type="PaxDb" id="9606-ENSP00000354848"/>
<dbReference type="PeptideAtlas" id="Q96EK5"/>
<dbReference type="ProteomicsDB" id="76417"/>
<dbReference type="Pumba" id="Q96EK5"/>
<dbReference type="Antibodypedia" id="28675">
    <property type="antibodies" value="97 antibodies from 20 providers"/>
</dbReference>
<dbReference type="DNASU" id="26128"/>
<dbReference type="Ensembl" id="ENST00000361983.7">
    <property type="protein sequence ID" value="ENSP00000354848.4"/>
    <property type="gene ID" value="ENSG00000198954.9"/>
</dbReference>
<dbReference type="GeneID" id="26128"/>
<dbReference type="KEGG" id="hsa:26128"/>
<dbReference type="MANE-Select" id="ENST00000361983.7">
    <property type="protein sequence ID" value="ENSP00000354848.4"/>
    <property type="RefSeq nucleotide sequence ID" value="NM_015634.4"/>
    <property type="RefSeq protein sequence ID" value="NP_056449.1"/>
</dbReference>
<dbReference type="UCSC" id="uc001joy.4">
    <property type="organism name" value="human"/>
</dbReference>
<dbReference type="AGR" id="HGNC:23419"/>
<dbReference type="CTD" id="26128"/>
<dbReference type="DisGeNET" id="26128"/>
<dbReference type="GeneCards" id="KIFBP"/>
<dbReference type="HGNC" id="HGNC:23419">
    <property type="gene designation" value="KIFBP"/>
</dbReference>
<dbReference type="HPA" id="ENSG00000198954">
    <property type="expression patterns" value="Low tissue specificity"/>
</dbReference>
<dbReference type="MalaCards" id="KIFBP"/>
<dbReference type="MIM" id="609367">
    <property type="type" value="gene"/>
</dbReference>
<dbReference type="MIM" id="609460">
    <property type="type" value="phenotype"/>
</dbReference>
<dbReference type="neXtProt" id="NX_Q96EK5"/>
<dbReference type="OpenTargets" id="ENSG00000198954"/>
<dbReference type="Orphanet" id="66629">
    <property type="disease" value="Goldberg-Shprintzen megacolon syndrome"/>
</dbReference>
<dbReference type="VEuPathDB" id="HostDB:ENSG00000198954"/>
<dbReference type="eggNOG" id="ENOG502QPZT">
    <property type="taxonomic scope" value="Eukaryota"/>
</dbReference>
<dbReference type="GeneTree" id="ENSGT00390000013819"/>
<dbReference type="HOGENOM" id="CLU_019859_1_0_1"/>
<dbReference type="InParanoid" id="Q96EK5"/>
<dbReference type="OMA" id="ICRECWY"/>
<dbReference type="OrthoDB" id="409897at2759"/>
<dbReference type="PAN-GO" id="Q96EK5">
    <property type="GO annotations" value="3 GO annotations based on evolutionary models"/>
</dbReference>
<dbReference type="PhylomeDB" id="Q96EK5"/>
<dbReference type="TreeFam" id="TF324211"/>
<dbReference type="PathwayCommons" id="Q96EK5"/>
<dbReference type="SignaLink" id="Q96EK5"/>
<dbReference type="BioGRID-ORCS" id="26128">
    <property type="hits" value="78 hits in 1146 CRISPR screens"/>
</dbReference>
<dbReference type="ChiTaRS" id="KIF1BP">
    <property type="organism name" value="human"/>
</dbReference>
<dbReference type="GeneWiki" id="KIAA1279"/>
<dbReference type="GenomeRNAi" id="26128"/>
<dbReference type="Pharos" id="Q96EK5">
    <property type="development level" value="Tbio"/>
</dbReference>
<dbReference type="PRO" id="PR:Q96EK5"/>
<dbReference type="Proteomes" id="UP000005640">
    <property type="component" value="Chromosome 10"/>
</dbReference>
<dbReference type="RNAct" id="Q96EK5">
    <property type="molecule type" value="protein"/>
</dbReference>
<dbReference type="Bgee" id="ENSG00000198954">
    <property type="expression patterns" value="Expressed in frontal pole and 207 other cell types or tissues"/>
</dbReference>
<dbReference type="ExpressionAtlas" id="Q96EK5">
    <property type="expression patterns" value="baseline and differential"/>
</dbReference>
<dbReference type="GO" id="GO:0005856">
    <property type="term" value="C:cytoskeleton"/>
    <property type="evidence" value="ECO:0007669"/>
    <property type="project" value="UniProtKB-SubCell"/>
</dbReference>
<dbReference type="GO" id="GO:0005739">
    <property type="term" value="C:mitochondrion"/>
    <property type="evidence" value="ECO:0000314"/>
    <property type="project" value="UniProtKB"/>
</dbReference>
<dbReference type="GO" id="GO:0019894">
    <property type="term" value="F:kinesin binding"/>
    <property type="evidence" value="ECO:0000353"/>
    <property type="project" value="UniProtKB"/>
</dbReference>
<dbReference type="GO" id="GO:0140311">
    <property type="term" value="F:protein sequestering activity"/>
    <property type="evidence" value="ECO:0000314"/>
    <property type="project" value="UniProtKB"/>
</dbReference>
<dbReference type="GO" id="GO:0021952">
    <property type="term" value="P:central nervous system projection neuron axonogenesis"/>
    <property type="evidence" value="ECO:0000318"/>
    <property type="project" value="GO_Central"/>
</dbReference>
<dbReference type="GO" id="GO:0001701">
    <property type="term" value="P:in utero embryonic development"/>
    <property type="evidence" value="ECO:0007669"/>
    <property type="project" value="Ensembl"/>
</dbReference>
<dbReference type="GO" id="GO:0000226">
    <property type="term" value="P:microtubule cytoskeleton organization"/>
    <property type="evidence" value="ECO:0000318"/>
    <property type="project" value="GO_Central"/>
</dbReference>
<dbReference type="GO" id="GO:0047497">
    <property type="term" value="P:mitochondrion transport along microtubule"/>
    <property type="evidence" value="ECO:0000315"/>
    <property type="project" value="UniProtKB"/>
</dbReference>
<dbReference type="GO" id="GO:1990535">
    <property type="term" value="P:neuron projection maintenance"/>
    <property type="evidence" value="ECO:0000318"/>
    <property type="project" value="GO_Central"/>
</dbReference>
<dbReference type="GO" id="GO:0010970">
    <property type="term" value="P:transport along microtubule"/>
    <property type="evidence" value="ECO:0000314"/>
    <property type="project" value="UniProtKB"/>
</dbReference>
<dbReference type="Gene3D" id="1.25.40.10">
    <property type="entry name" value="Tetratricopeptide repeat domain"/>
    <property type="match status" value="1"/>
</dbReference>
<dbReference type="InterPro" id="IPR022083">
    <property type="entry name" value="KBP"/>
</dbReference>
<dbReference type="InterPro" id="IPR011990">
    <property type="entry name" value="TPR-like_helical_dom_sf"/>
</dbReference>
<dbReference type="PANTHER" id="PTHR46321:SF1">
    <property type="entry name" value="KIF-BINDING PROTEIN"/>
    <property type="match status" value="1"/>
</dbReference>
<dbReference type="PANTHER" id="PTHR46321">
    <property type="entry name" value="KIF1-BINDING PROTEIN"/>
    <property type="match status" value="1"/>
</dbReference>
<dbReference type="Pfam" id="PF12309">
    <property type="entry name" value="KBP_C"/>
    <property type="match status" value="1"/>
</dbReference>
<dbReference type="SUPFAM" id="SSF48452">
    <property type="entry name" value="TPR-like"/>
    <property type="match status" value="1"/>
</dbReference>
<gene>
    <name evidence="13" type="primary">KIFBP</name>
    <name evidence="8" type="synonym">KBP</name>
    <name evidence="7" type="synonym">KIAA1279</name>
    <name evidence="8" type="synonym">KIF1BP</name>
</gene>
<keyword id="KW-0002">3D-structure</keyword>
<keyword id="KW-0963">Cytoplasm</keyword>
<keyword id="KW-0206">Cytoskeleton</keyword>
<keyword id="KW-0217">Developmental protein</keyword>
<keyword id="KW-0221">Differentiation</keyword>
<keyword id="KW-0367">Hirschsprung disease</keyword>
<keyword id="KW-0524">Neurogenesis</keyword>
<keyword id="KW-0597">Phosphoprotein</keyword>
<keyword id="KW-1267">Proteomics identification</keyword>
<keyword id="KW-1185">Reference proteome</keyword>
<feature type="chain" id="PRO_0000050791" description="KIF-binding protein">
    <location>
        <begin position="1"/>
        <end position="621"/>
    </location>
</feature>
<feature type="region of interest" description="Disordered" evidence="1">
    <location>
        <begin position="51"/>
        <end position="75"/>
    </location>
</feature>
<feature type="compositionally biased region" description="Acidic residues" evidence="1">
    <location>
        <begin position="54"/>
        <end position="65"/>
    </location>
</feature>
<feature type="modified residue" description="Phosphoserine" evidence="14">
    <location>
        <position position="178"/>
    </location>
</feature>
<feature type="sequence variant" id="VAR_023311" description="In dbSNP:rs2255607." evidence="2">
    <original>G</original>
    <variation>S</variation>
    <location>
        <position position="66"/>
    </location>
</feature>
<feature type="sequence conflict" description="In Ref. 4; BAF84032." evidence="9" ref="4">
    <original>I</original>
    <variation>T</variation>
    <location>
        <position position="139"/>
    </location>
</feature>
<feature type="sequence conflict" description="In Ref. 4; BAF84032." evidence="9" ref="4">
    <original>G</original>
    <variation>A</variation>
    <location>
        <position position="334"/>
    </location>
</feature>
<feature type="sequence conflict" description="In Ref. 4; BAF84032." evidence="9" ref="4">
    <original>H</original>
    <variation>R</variation>
    <location>
        <position position="419"/>
    </location>
</feature>
<protein>
    <recommendedName>
        <fullName>KIF-binding protein</fullName>
    </recommendedName>
    <alternativeName>
        <fullName evidence="10">KIF1-binding protein</fullName>
    </alternativeName>
    <alternativeName>
        <fullName evidence="13">Kinesin family binding protein</fullName>
    </alternativeName>
</protein>
<organism>
    <name type="scientific">Homo sapiens</name>
    <name type="common">Human</name>
    <dbReference type="NCBI Taxonomy" id="9606"/>
    <lineage>
        <taxon>Eukaryota</taxon>
        <taxon>Metazoa</taxon>
        <taxon>Chordata</taxon>
        <taxon>Craniata</taxon>
        <taxon>Vertebrata</taxon>
        <taxon>Euteleostomi</taxon>
        <taxon>Mammalia</taxon>
        <taxon>Eutheria</taxon>
        <taxon>Euarchontoglires</taxon>
        <taxon>Primates</taxon>
        <taxon>Haplorrhini</taxon>
        <taxon>Catarrhini</taxon>
        <taxon>Hominidae</taxon>
        <taxon>Homo</taxon>
    </lineage>
</organism>